<comment type="function">
    <text evidence="4">As part of the BORC complex may play a role in lysosomes movement and localization at the cell periphery. Associated with the cytosolic face of lysosomes, the BORC complex may recruit ARL8B and couple lysosomes to microtubule plus-end-directed kinesin motor.</text>
</comment>
<comment type="subunit">
    <text evidence="1">Component of the BLOC-one-related complex (BORC) which is composed of BLOC1S1, BLOC1S2, BORCS5, BORCS6, BORCS7, BORCS8, KXD1 and SNAPIN.</text>
</comment>
<comment type="subcellular location">
    <subcellularLocation>
        <location evidence="4">Lysosome membrane</location>
    </subcellularLocation>
</comment>
<comment type="miscellaneous">
    <text evidence="2">Diaskedin is from the ancient Greek diaskedazo, meaning to disperse.</text>
</comment>
<comment type="similarity">
    <text evidence="3">Belongs to the BORCS7 family.</text>
</comment>
<comment type="sequence caution" evidence="3">
    <conflict type="erroneous initiation">
        <sequence resource="EMBL-CDS" id="AAH15994"/>
    </conflict>
    <text>Truncated N-terminus.</text>
</comment>
<comment type="sequence caution" evidence="3">
    <conflict type="erroneous initiation">
        <sequence resource="EMBL-CDS" id="BAG34685"/>
    </conflict>
    <text>Truncated N-terminus.</text>
</comment>
<comment type="sequence caution" evidence="3">
    <conflict type="erroneous initiation">
        <sequence resource="EMBL-CDS" id="CAI46115"/>
    </conflict>
    <text>Truncated N-terminus.</text>
</comment>
<feature type="chain" id="PRO_0000089787" description="BLOC-1-related complex subunit 7">
    <location>
        <begin position="1"/>
        <end position="106"/>
    </location>
</feature>
<dbReference type="EMBL" id="AK098071">
    <property type="protein sequence ID" value="BAG53576.1"/>
    <property type="molecule type" value="mRNA"/>
</dbReference>
<dbReference type="EMBL" id="AK311742">
    <property type="protein sequence ID" value="BAG34685.1"/>
    <property type="status" value="ALT_INIT"/>
    <property type="molecule type" value="mRNA"/>
</dbReference>
<dbReference type="EMBL" id="AL832477">
    <property type="protein sequence ID" value="CAI46115.1"/>
    <property type="status" value="ALT_INIT"/>
    <property type="molecule type" value="mRNA"/>
</dbReference>
<dbReference type="EMBL" id="AL358790">
    <property type="status" value="NOT_ANNOTATED_CDS"/>
    <property type="molecule type" value="Genomic_DNA"/>
</dbReference>
<dbReference type="EMBL" id="BC015994">
    <property type="protein sequence ID" value="AAH15994.1"/>
    <property type="status" value="ALT_INIT"/>
    <property type="molecule type" value="mRNA"/>
</dbReference>
<dbReference type="CCDS" id="CCDS7542.2"/>
<dbReference type="RefSeq" id="NP_001129672.1">
    <property type="nucleotide sequence ID" value="NM_001136200.2"/>
</dbReference>
<dbReference type="RefSeq" id="NP_653192.2">
    <property type="nucleotide sequence ID" value="NM_144591.5"/>
</dbReference>
<dbReference type="SMR" id="Q96B45"/>
<dbReference type="BioGRID" id="125633">
    <property type="interactions" value="32"/>
</dbReference>
<dbReference type="ComplexPortal" id="CPX-5029">
    <property type="entry name" value="BORC complex"/>
</dbReference>
<dbReference type="CORUM" id="Q96B45"/>
<dbReference type="FunCoup" id="Q96B45">
    <property type="interactions" value="87"/>
</dbReference>
<dbReference type="IntAct" id="Q96B45">
    <property type="interactions" value="32"/>
</dbReference>
<dbReference type="MINT" id="Q96B45"/>
<dbReference type="STRING" id="9606.ENSP00000342331"/>
<dbReference type="GlyGen" id="Q96B45">
    <property type="glycosylation" value="1 site, 1 O-linked glycan (1 site)"/>
</dbReference>
<dbReference type="iPTMnet" id="Q96B45"/>
<dbReference type="PhosphoSitePlus" id="Q96B45"/>
<dbReference type="BioMuta" id="BORCS7"/>
<dbReference type="jPOST" id="Q96B45"/>
<dbReference type="MassIVE" id="Q96B45"/>
<dbReference type="PaxDb" id="9606-ENSP00000342331"/>
<dbReference type="PeptideAtlas" id="Q96B45"/>
<dbReference type="ProteomicsDB" id="76044"/>
<dbReference type="Pumba" id="Q96B45"/>
<dbReference type="Antibodypedia" id="48493">
    <property type="antibodies" value="62 antibodies from 18 providers"/>
</dbReference>
<dbReference type="DNASU" id="119032"/>
<dbReference type="Ensembl" id="ENST00000339834.10">
    <property type="protein sequence ID" value="ENSP00000342331.5"/>
    <property type="gene ID" value="ENSG00000166275.16"/>
</dbReference>
<dbReference type="Ensembl" id="ENST00000369883.3">
    <property type="protein sequence ID" value="ENSP00000358899.3"/>
    <property type="gene ID" value="ENSG00000166275.16"/>
</dbReference>
<dbReference type="GeneID" id="119032"/>
<dbReference type="KEGG" id="hsa:119032"/>
<dbReference type="MANE-Select" id="ENST00000339834.10">
    <property type="protein sequence ID" value="ENSP00000342331.5"/>
    <property type="RefSeq nucleotide sequence ID" value="NM_001136200.2"/>
    <property type="RefSeq protein sequence ID" value="NP_001129672.1"/>
</dbReference>
<dbReference type="UCSC" id="uc001kwh.3">
    <property type="organism name" value="human"/>
</dbReference>
<dbReference type="AGR" id="HGNC:23516"/>
<dbReference type="CTD" id="119032"/>
<dbReference type="DisGeNET" id="119032"/>
<dbReference type="GeneCards" id="BORCS7"/>
<dbReference type="HGNC" id="HGNC:23516">
    <property type="gene designation" value="BORCS7"/>
</dbReference>
<dbReference type="HPA" id="ENSG00000166275">
    <property type="expression patterns" value="Low tissue specificity"/>
</dbReference>
<dbReference type="MIM" id="616600">
    <property type="type" value="gene"/>
</dbReference>
<dbReference type="neXtProt" id="NX_Q96B45"/>
<dbReference type="OpenTargets" id="ENSG00000166275"/>
<dbReference type="PharmGKB" id="PA134928831"/>
<dbReference type="VEuPathDB" id="HostDB:ENSG00000166275"/>
<dbReference type="eggNOG" id="ENOG502S2QS">
    <property type="taxonomic scope" value="Eukaryota"/>
</dbReference>
<dbReference type="GeneTree" id="ENSGT00390000015849"/>
<dbReference type="HOGENOM" id="CLU_150749_1_0_1"/>
<dbReference type="InParanoid" id="Q96B45"/>
<dbReference type="OMA" id="HAAKNFA"/>
<dbReference type="OrthoDB" id="5567844at2759"/>
<dbReference type="PAN-GO" id="Q96B45">
    <property type="GO annotations" value="1 GO annotation based on evolutionary models"/>
</dbReference>
<dbReference type="PhylomeDB" id="Q96B45"/>
<dbReference type="TreeFam" id="TF314767"/>
<dbReference type="PathwayCommons" id="Q96B45"/>
<dbReference type="SignaLink" id="Q96B45"/>
<dbReference type="BioGRID-ORCS" id="119032">
    <property type="hits" value="21 hits in 1111 CRISPR screens"/>
</dbReference>
<dbReference type="GenomeRNAi" id="119032"/>
<dbReference type="Pharos" id="Q96B45">
    <property type="development level" value="Tbio"/>
</dbReference>
<dbReference type="PRO" id="PR:Q96B45"/>
<dbReference type="Proteomes" id="UP000005640">
    <property type="component" value="Chromosome 10"/>
</dbReference>
<dbReference type="RNAct" id="Q96B45">
    <property type="molecule type" value="protein"/>
</dbReference>
<dbReference type="Bgee" id="ENSG00000166275">
    <property type="expression patterns" value="Expressed in adrenal tissue and 191 other cell types or tissues"/>
</dbReference>
<dbReference type="GO" id="GO:0099078">
    <property type="term" value="C:BORC complex"/>
    <property type="evidence" value="ECO:0000314"/>
    <property type="project" value="UniProtKB"/>
</dbReference>
<dbReference type="GO" id="GO:0098574">
    <property type="term" value="C:cytoplasmic side of lysosomal membrane"/>
    <property type="evidence" value="ECO:0000303"/>
    <property type="project" value="ComplexPortal"/>
</dbReference>
<dbReference type="GO" id="GO:0061564">
    <property type="term" value="P:axon development"/>
    <property type="evidence" value="ECO:0007669"/>
    <property type="project" value="Ensembl"/>
</dbReference>
<dbReference type="GO" id="GO:0032418">
    <property type="term" value="P:lysosome localization"/>
    <property type="evidence" value="ECO:0000303"/>
    <property type="project" value="ComplexPortal"/>
</dbReference>
<dbReference type="GO" id="GO:0061744">
    <property type="term" value="P:motor behavior"/>
    <property type="evidence" value="ECO:0007669"/>
    <property type="project" value="Ensembl"/>
</dbReference>
<dbReference type="GO" id="GO:0050905">
    <property type="term" value="P:neuromuscular process"/>
    <property type="evidence" value="ECO:0007669"/>
    <property type="project" value="Ensembl"/>
</dbReference>
<dbReference type="GO" id="GO:0072384">
    <property type="term" value="P:organelle transport along microtubule"/>
    <property type="evidence" value="ECO:0000303"/>
    <property type="project" value="ComplexPortal"/>
</dbReference>
<dbReference type="GO" id="GO:0051036">
    <property type="term" value="P:regulation of endosome size"/>
    <property type="evidence" value="ECO:0000303"/>
    <property type="project" value="ComplexPortal"/>
</dbReference>
<dbReference type="GO" id="GO:0062196">
    <property type="term" value="P:regulation of lysosome size"/>
    <property type="evidence" value="ECO:0000303"/>
    <property type="project" value="ComplexPortal"/>
</dbReference>
<dbReference type="GO" id="GO:0046898">
    <property type="term" value="P:response to cycloheximide"/>
    <property type="evidence" value="ECO:0007669"/>
    <property type="project" value="Ensembl"/>
</dbReference>
<dbReference type="GO" id="GO:0016192">
    <property type="term" value="P:vesicle-mediated transport"/>
    <property type="evidence" value="ECO:0007669"/>
    <property type="project" value="Ensembl"/>
</dbReference>
<dbReference type="GO" id="GO:0090659">
    <property type="term" value="P:walking behavior"/>
    <property type="evidence" value="ECO:0007669"/>
    <property type="project" value="Ensembl"/>
</dbReference>
<dbReference type="InterPro" id="IPR032143">
    <property type="entry name" value="BORCS7"/>
</dbReference>
<dbReference type="PANTHER" id="PTHR31397:SF3">
    <property type="entry name" value="BLOC-1-RELATED COMPLEX SUBUNIT 7"/>
    <property type="match status" value="1"/>
</dbReference>
<dbReference type="PANTHER" id="PTHR31397">
    <property type="entry name" value="BLOC-1-RELATED COMPLEX SUBUNIT 7 BORSC7"/>
    <property type="match status" value="1"/>
</dbReference>
<dbReference type="Pfam" id="PF16088">
    <property type="entry name" value="BORCS7"/>
    <property type="match status" value="1"/>
</dbReference>
<protein>
    <recommendedName>
        <fullName evidence="3">BLOC-1-related complex subunit 7</fullName>
    </recommendedName>
    <alternativeName>
        <fullName evidence="2">Diaskedin</fullName>
    </alternativeName>
</protein>
<organism>
    <name type="scientific">Homo sapiens</name>
    <name type="common">Human</name>
    <dbReference type="NCBI Taxonomy" id="9606"/>
    <lineage>
        <taxon>Eukaryota</taxon>
        <taxon>Metazoa</taxon>
        <taxon>Chordata</taxon>
        <taxon>Craniata</taxon>
        <taxon>Vertebrata</taxon>
        <taxon>Euteleostomi</taxon>
        <taxon>Mammalia</taxon>
        <taxon>Eutheria</taxon>
        <taxon>Euarchontoglires</taxon>
        <taxon>Primates</taxon>
        <taxon>Haplorrhini</taxon>
        <taxon>Catarrhini</taxon>
        <taxon>Hominidae</taxon>
        <taxon>Homo</taxon>
    </lineage>
</organism>
<proteinExistence type="evidence at protein level"/>
<reference key="1">
    <citation type="journal article" date="2004" name="Nat. Genet.">
        <title>Complete sequencing and characterization of 21,243 full-length human cDNAs.</title>
        <authorList>
            <person name="Ota T."/>
            <person name="Suzuki Y."/>
            <person name="Nishikawa T."/>
            <person name="Otsuki T."/>
            <person name="Sugiyama T."/>
            <person name="Irie R."/>
            <person name="Wakamatsu A."/>
            <person name="Hayashi K."/>
            <person name="Sato H."/>
            <person name="Nagai K."/>
            <person name="Kimura K."/>
            <person name="Makita H."/>
            <person name="Sekine M."/>
            <person name="Obayashi M."/>
            <person name="Nishi T."/>
            <person name="Shibahara T."/>
            <person name="Tanaka T."/>
            <person name="Ishii S."/>
            <person name="Yamamoto J."/>
            <person name="Saito K."/>
            <person name="Kawai Y."/>
            <person name="Isono Y."/>
            <person name="Nakamura Y."/>
            <person name="Nagahari K."/>
            <person name="Murakami K."/>
            <person name="Yasuda T."/>
            <person name="Iwayanagi T."/>
            <person name="Wagatsuma M."/>
            <person name="Shiratori A."/>
            <person name="Sudo H."/>
            <person name="Hosoiri T."/>
            <person name="Kaku Y."/>
            <person name="Kodaira H."/>
            <person name="Kondo H."/>
            <person name="Sugawara M."/>
            <person name="Takahashi M."/>
            <person name="Kanda K."/>
            <person name="Yokoi T."/>
            <person name="Furuya T."/>
            <person name="Kikkawa E."/>
            <person name="Omura Y."/>
            <person name="Abe K."/>
            <person name="Kamihara K."/>
            <person name="Katsuta N."/>
            <person name="Sato K."/>
            <person name="Tanikawa M."/>
            <person name="Yamazaki M."/>
            <person name="Ninomiya K."/>
            <person name="Ishibashi T."/>
            <person name="Yamashita H."/>
            <person name="Murakawa K."/>
            <person name="Fujimori K."/>
            <person name="Tanai H."/>
            <person name="Kimata M."/>
            <person name="Watanabe M."/>
            <person name="Hiraoka S."/>
            <person name="Chiba Y."/>
            <person name="Ishida S."/>
            <person name="Ono Y."/>
            <person name="Takiguchi S."/>
            <person name="Watanabe S."/>
            <person name="Yosida M."/>
            <person name="Hotuta T."/>
            <person name="Kusano J."/>
            <person name="Kanehori K."/>
            <person name="Takahashi-Fujii A."/>
            <person name="Hara H."/>
            <person name="Tanase T.-O."/>
            <person name="Nomura Y."/>
            <person name="Togiya S."/>
            <person name="Komai F."/>
            <person name="Hara R."/>
            <person name="Takeuchi K."/>
            <person name="Arita M."/>
            <person name="Imose N."/>
            <person name="Musashino K."/>
            <person name="Yuuki H."/>
            <person name="Oshima A."/>
            <person name="Sasaki N."/>
            <person name="Aotsuka S."/>
            <person name="Yoshikawa Y."/>
            <person name="Matsunawa H."/>
            <person name="Ichihara T."/>
            <person name="Shiohata N."/>
            <person name="Sano S."/>
            <person name="Moriya S."/>
            <person name="Momiyama H."/>
            <person name="Satoh N."/>
            <person name="Takami S."/>
            <person name="Terashima Y."/>
            <person name="Suzuki O."/>
            <person name="Nakagawa S."/>
            <person name="Senoh A."/>
            <person name="Mizoguchi H."/>
            <person name="Goto Y."/>
            <person name="Shimizu F."/>
            <person name="Wakebe H."/>
            <person name="Hishigaki H."/>
            <person name="Watanabe T."/>
            <person name="Sugiyama A."/>
            <person name="Takemoto M."/>
            <person name="Kawakami B."/>
            <person name="Yamazaki M."/>
            <person name="Watanabe K."/>
            <person name="Kumagai A."/>
            <person name="Itakura S."/>
            <person name="Fukuzumi Y."/>
            <person name="Fujimori Y."/>
            <person name="Komiyama M."/>
            <person name="Tashiro H."/>
            <person name="Tanigami A."/>
            <person name="Fujiwara T."/>
            <person name="Ono T."/>
            <person name="Yamada K."/>
            <person name="Fujii Y."/>
            <person name="Ozaki K."/>
            <person name="Hirao M."/>
            <person name="Ohmori Y."/>
            <person name="Kawabata A."/>
            <person name="Hikiji T."/>
            <person name="Kobatake N."/>
            <person name="Inagaki H."/>
            <person name="Ikema Y."/>
            <person name="Okamoto S."/>
            <person name="Okitani R."/>
            <person name="Kawakami T."/>
            <person name="Noguchi S."/>
            <person name="Itoh T."/>
            <person name="Shigeta K."/>
            <person name="Senba T."/>
            <person name="Matsumura K."/>
            <person name="Nakajima Y."/>
            <person name="Mizuno T."/>
            <person name="Morinaga M."/>
            <person name="Sasaki M."/>
            <person name="Togashi T."/>
            <person name="Oyama M."/>
            <person name="Hata H."/>
            <person name="Watanabe M."/>
            <person name="Komatsu T."/>
            <person name="Mizushima-Sugano J."/>
            <person name="Satoh T."/>
            <person name="Shirai Y."/>
            <person name="Takahashi Y."/>
            <person name="Nakagawa K."/>
            <person name="Okumura K."/>
            <person name="Nagase T."/>
            <person name="Nomura N."/>
            <person name="Kikuchi H."/>
            <person name="Masuho Y."/>
            <person name="Yamashita R."/>
            <person name="Nakai K."/>
            <person name="Yada T."/>
            <person name="Nakamura Y."/>
            <person name="Ohara O."/>
            <person name="Isogai T."/>
            <person name="Sugano S."/>
        </authorList>
    </citation>
    <scope>NUCLEOTIDE SEQUENCE [LARGE SCALE MRNA]</scope>
    <source>
        <tissue>Adrenal gland</tissue>
        <tissue>Trachea</tissue>
    </source>
</reference>
<reference key="2">
    <citation type="journal article" date="2007" name="BMC Genomics">
        <title>The full-ORF clone resource of the German cDNA consortium.</title>
        <authorList>
            <person name="Bechtel S."/>
            <person name="Rosenfelder H."/>
            <person name="Duda A."/>
            <person name="Schmidt C.P."/>
            <person name="Ernst U."/>
            <person name="Wellenreuther R."/>
            <person name="Mehrle A."/>
            <person name="Schuster C."/>
            <person name="Bahr A."/>
            <person name="Bloecker H."/>
            <person name="Heubner D."/>
            <person name="Hoerlein A."/>
            <person name="Michel G."/>
            <person name="Wedler H."/>
            <person name="Koehrer K."/>
            <person name="Ottenwaelder B."/>
            <person name="Poustka A."/>
            <person name="Wiemann S."/>
            <person name="Schupp I."/>
        </authorList>
    </citation>
    <scope>NUCLEOTIDE SEQUENCE [LARGE SCALE MRNA]</scope>
    <source>
        <tissue>Cervix</tissue>
    </source>
</reference>
<reference key="3">
    <citation type="journal article" date="2004" name="Nature">
        <title>The DNA sequence and comparative analysis of human chromosome 10.</title>
        <authorList>
            <person name="Deloukas P."/>
            <person name="Earthrowl M.E."/>
            <person name="Grafham D.V."/>
            <person name="Rubenfield M."/>
            <person name="French L."/>
            <person name="Steward C.A."/>
            <person name="Sims S.K."/>
            <person name="Jones M.C."/>
            <person name="Searle S."/>
            <person name="Scott C."/>
            <person name="Howe K."/>
            <person name="Hunt S.E."/>
            <person name="Andrews T.D."/>
            <person name="Gilbert J.G.R."/>
            <person name="Swarbreck D."/>
            <person name="Ashurst J.L."/>
            <person name="Taylor A."/>
            <person name="Battles J."/>
            <person name="Bird C.P."/>
            <person name="Ainscough R."/>
            <person name="Almeida J.P."/>
            <person name="Ashwell R.I.S."/>
            <person name="Ambrose K.D."/>
            <person name="Babbage A.K."/>
            <person name="Bagguley C.L."/>
            <person name="Bailey J."/>
            <person name="Banerjee R."/>
            <person name="Bates K."/>
            <person name="Beasley H."/>
            <person name="Bray-Allen S."/>
            <person name="Brown A.J."/>
            <person name="Brown J.Y."/>
            <person name="Burford D.C."/>
            <person name="Burrill W."/>
            <person name="Burton J."/>
            <person name="Cahill P."/>
            <person name="Camire D."/>
            <person name="Carter N.P."/>
            <person name="Chapman J.C."/>
            <person name="Clark S.Y."/>
            <person name="Clarke G."/>
            <person name="Clee C.M."/>
            <person name="Clegg S."/>
            <person name="Corby N."/>
            <person name="Coulson A."/>
            <person name="Dhami P."/>
            <person name="Dutta I."/>
            <person name="Dunn M."/>
            <person name="Faulkner L."/>
            <person name="Frankish A."/>
            <person name="Frankland J.A."/>
            <person name="Garner P."/>
            <person name="Garnett J."/>
            <person name="Gribble S."/>
            <person name="Griffiths C."/>
            <person name="Grocock R."/>
            <person name="Gustafson E."/>
            <person name="Hammond S."/>
            <person name="Harley J.L."/>
            <person name="Hart E."/>
            <person name="Heath P.D."/>
            <person name="Ho T.P."/>
            <person name="Hopkins B."/>
            <person name="Horne J."/>
            <person name="Howden P.J."/>
            <person name="Huckle E."/>
            <person name="Hynds C."/>
            <person name="Johnson C."/>
            <person name="Johnson D."/>
            <person name="Kana A."/>
            <person name="Kay M."/>
            <person name="Kimberley A.M."/>
            <person name="Kershaw J.K."/>
            <person name="Kokkinaki M."/>
            <person name="Laird G.K."/>
            <person name="Lawlor S."/>
            <person name="Lee H.M."/>
            <person name="Leongamornlert D.A."/>
            <person name="Laird G."/>
            <person name="Lloyd C."/>
            <person name="Lloyd D.M."/>
            <person name="Loveland J."/>
            <person name="Lovell J."/>
            <person name="McLaren S."/>
            <person name="McLay K.E."/>
            <person name="McMurray A."/>
            <person name="Mashreghi-Mohammadi M."/>
            <person name="Matthews L."/>
            <person name="Milne S."/>
            <person name="Nickerson T."/>
            <person name="Nguyen M."/>
            <person name="Overton-Larty E."/>
            <person name="Palmer S.A."/>
            <person name="Pearce A.V."/>
            <person name="Peck A.I."/>
            <person name="Pelan S."/>
            <person name="Phillimore B."/>
            <person name="Porter K."/>
            <person name="Rice C.M."/>
            <person name="Rogosin A."/>
            <person name="Ross M.T."/>
            <person name="Sarafidou T."/>
            <person name="Sehra H.K."/>
            <person name="Shownkeen R."/>
            <person name="Skuce C.D."/>
            <person name="Smith M."/>
            <person name="Standring L."/>
            <person name="Sycamore N."/>
            <person name="Tester J."/>
            <person name="Thorpe A."/>
            <person name="Torcasso W."/>
            <person name="Tracey A."/>
            <person name="Tromans A."/>
            <person name="Tsolas J."/>
            <person name="Wall M."/>
            <person name="Walsh J."/>
            <person name="Wang H."/>
            <person name="Weinstock K."/>
            <person name="West A.P."/>
            <person name="Willey D.L."/>
            <person name="Whitehead S.L."/>
            <person name="Wilming L."/>
            <person name="Wray P.W."/>
            <person name="Young L."/>
            <person name="Chen Y."/>
            <person name="Lovering R.C."/>
            <person name="Moschonas N.K."/>
            <person name="Siebert R."/>
            <person name="Fechtel K."/>
            <person name="Bentley D."/>
            <person name="Durbin R.M."/>
            <person name="Hubbard T."/>
            <person name="Doucette-Stamm L."/>
            <person name="Beck S."/>
            <person name="Smith D.R."/>
            <person name="Rogers J."/>
        </authorList>
    </citation>
    <scope>NUCLEOTIDE SEQUENCE [LARGE SCALE GENOMIC DNA]</scope>
</reference>
<reference key="4">
    <citation type="journal article" date="2004" name="Genome Res.">
        <title>The status, quality, and expansion of the NIH full-length cDNA project: the Mammalian Gene Collection (MGC).</title>
        <authorList>
            <consortium name="The MGC Project Team"/>
        </authorList>
    </citation>
    <scope>NUCLEOTIDE SEQUENCE [LARGE SCALE MRNA]</scope>
    <source>
        <tissue>Testis</tissue>
    </source>
</reference>
<reference key="5">
    <citation type="journal article" date="2015" name="Dev. Cell">
        <title>BORC, a multisubunit complex that regulates lysosome positioning.</title>
        <authorList>
            <person name="Pu J."/>
            <person name="Schindler C."/>
            <person name="Jia R."/>
            <person name="Jarnik M."/>
            <person name="Backlund P."/>
            <person name="Bonifacino J.S."/>
        </authorList>
    </citation>
    <scope>FUNCTION</scope>
    <scope>IDENTIFICATION OF THE BORC COMPLEX</scope>
    <scope>SUBCELLULAR LOCATION</scope>
</reference>
<name>BORC7_HUMAN</name>
<sequence length="106" mass="11695">MMATGTPESQARFGQSVKGLLTEKVTTCGTDVIALTKQVLKGSRSSELLGQAARNMVLQEDAILHSEDSLRKMAIITTHLQYQQEAIQKNVEQSSDLQDQLNHLLK</sequence>
<gene>
    <name evidence="5" type="primary">BORCS7</name>
    <name evidence="5" type="synonym">C10orf32</name>
</gene>
<evidence type="ECO:0000269" key="1">
    <source>
    </source>
</evidence>
<evidence type="ECO:0000303" key="2">
    <source>
    </source>
</evidence>
<evidence type="ECO:0000305" key="3"/>
<evidence type="ECO:0000305" key="4">
    <source>
    </source>
</evidence>
<evidence type="ECO:0000312" key="5">
    <source>
        <dbReference type="HGNC" id="HGNC:23516"/>
    </source>
</evidence>
<keyword id="KW-0458">Lysosome</keyword>
<keyword id="KW-0472">Membrane</keyword>
<keyword id="KW-1267">Proteomics identification</keyword>
<keyword id="KW-1185">Reference proteome</keyword>
<accession>Q96B45</accession>
<accession>B2R488</accession>
<accession>B3KUW4</accession>
<accession>C9K0X3</accession>